<evidence type="ECO:0000255" key="1">
    <source>
        <dbReference type="HAMAP-Rule" id="MF_00802"/>
    </source>
</evidence>
<organism>
    <name type="scientific">Mycobacterium tuberculosis (strain ATCC 25618 / H37Rv)</name>
    <dbReference type="NCBI Taxonomy" id="83332"/>
    <lineage>
        <taxon>Bacteria</taxon>
        <taxon>Bacillati</taxon>
        <taxon>Actinomycetota</taxon>
        <taxon>Actinomycetes</taxon>
        <taxon>Mycobacteriales</taxon>
        <taxon>Mycobacteriaceae</taxon>
        <taxon>Mycobacterium</taxon>
        <taxon>Mycobacterium tuberculosis complex</taxon>
    </lineage>
</organism>
<dbReference type="EC" id="2.7.7.89" evidence="1"/>
<dbReference type="EC" id="2.7.7.42" evidence="1"/>
<dbReference type="EMBL" id="AL123456">
    <property type="protein sequence ID" value="CCP44999.1"/>
    <property type="molecule type" value="Genomic_DNA"/>
</dbReference>
<dbReference type="PIR" id="A70776">
    <property type="entry name" value="A70776"/>
</dbReference>
<dbReference type="RefSeq" id="NP_216737.1">
    <property type="nucleotide sequence ID" value="NC_000962.3"/>
</dbReference>
<dbReference type="RefSeq" id="WP_003411478.1">
    <property type="nucleotide sequence ID" value="NZ_NVQJ01000008.1"/>
</dbReference>
<dbReference type="SMR" id="P9WN27"/>
<dbReference type="FunCoup" id="P9WN27">
    <property type="interactions" value="4"/>
</dbReference>
<dbReference type="STRING" id="83332.Rv2221c"/>
<dbReference type="PaxDb" id="83332-Rv2221c"/>
<dbReference type="DNASU" id="887995"/>
<dbReference type="GeneID" id="887995"/>
<dbReference type="KEGG" id="mtu:Rv2221c"/>
<dbReference type="KEGG" id="mtv:RVBD_2221c"/>
<dbReference type="TubercuList" id="Rv2221c"/>
<dbReference type="eggNOG" id="COG1391">
    <property type="taxonomic scope" value="Bacteria"/>
</dbReference>
<dbReference type="InParanoid" id="P9WN27"/>
<dbReference type="OrthoDB" id="9759366at2"/>
<dbReference type="PhylomeDB" id="P9WN27"/>
<dbReference type="BRENDA" id="2.7.7.42">
    <property type="organism ID" value="3445"/>
</dbReference>
<dbReference type="Proteomes" id="UP000001584">
    <property type="component" value="Chromosome"/>
</dbReference>
<dbReference type="GO" id="GO:0005829">
    <property type="term" value="C:cytosol"/>
    <property type="evidence" value="ECO:0000318"/>
    <property type="project" value="GO_Central"/>
</dbReference>
<dbReference type="GO" id="GO:0009274">
    <property type="term" value="C:peptidoglycan-based cell wall"/>
    <property type="evidence" value="ECO:0007005"/>
    <property type="project" value="MTBBASE"/>
</dbReference>
<dbReference type="GO" id="GO:0005886">
    <property type="term" value="C:plasma membrane"/>
    <property type="evidence" value="ECO:0007005"/>
    <property type="project" value="MTBBASE"/>
</dbReference>
<dbReference type="GO" id="GO:0008882">
    <property type="term" value="F:[glutamate-ammonia-ligase] adenylyltransferase activity"/>
    <property type="evidence" value="ECO:0000315"/>
    <property type="project" value="MTBBASE"/>
</dbReference>
<dbReference type="GO" id="GO:0047388">
    <property type="term" value="F:[glutamine synthetase]-adenylyl-L-tyrosine phosphorylase activity"/>
    <property type="evidence" value="ECO:0007669"/>
    <property type="project" value="UniProtKB-EC"/>
</dbReference>
<dbReference type="GO" id="GO:0005524">
    <property type="term" value="F:ATP binding"/>
    <property type="evidence" value="ECO:0007669"/>
    <property type="project" value="UniProtKB-UniRule"/>
</dbReference>
<dbReference type="GO" id="GO:0000287">
    <property type="term" value="F:magnesium ion binding"/>
    <property type="evidence" value="ECO:0007669"/>
    <property type="project" value="UniProtKB-UniRule"/>
</dbReference>
<dbReference type="GO" id="GO:0000820">
    <property type="term" value="P:regulation of glutamine family amino acid metabolic process"/>
    <property type="evidence" value="ECO:0000318"/>
    <property type="project" value="GO_Central"/>
</dbReference>
<dbReference type="GO" id="GO:0062132">
    <property type="term" value="P:regulation of L-glutamine biosynthetic process"/>
    <property type="evidence" value="ECO:0000315"/>
    <property type="project" value="UniProtKB"/>
</dbReference>
<dbReference type="CDD" id="cd05401">
    <property type="entry name" value="NT_GlnE_GlnD_like"/>
    <property type="match status" value="2"/>
</dbReference>
<dbReference type="FunFam" id="1.20.120.330:FF:000022">
    <property type="entry name" value="Bifunctional glutamine synthetase adenylyltransferase/adenylyl-removing enzyme"/>
    <property type="match status" value="1"/>
</dbReference>
<dbReference type="FunFam" id="1.20.120.330:FF:000023">
    <property type="entry name" value="Bifunctional glutamine synthetase adenylyltransferase/adenylyl-removing enzyme"/>
    <property type="match status" value="1"/>
</dbReference>
<dbReference type="FunFam" id="3.30.460.10:FF:000055">
    <property type="entry name" value="Bifunctional glutamine synthetase adenylyltransferase/adenylyl-removing enzyme"/>
    <property type="match status" value="1"/>
</dbReference>
<dbReference type="Gene3D" id="3.30.460.10">
    <property type="entry name" value="Beta Polymerase, domain 2"/>
    <property type="match status" value="2"/>
</dbReference>
<dbReference type="Gene3D" id="1.20.120.330">
    <property type="entry name" value="Nucleotidyltransferases domain 2"/>
    <property type="match status" value="2"/>
</dbReference>
<dbReference type="HAMAP" id="MF_00802">
    <property type="entry name" value="GlnE"/>
    <property type="match status" value="1"/>
</dbReference>
<dbReference type="InterPro" id="IPR023057">
    <property type="entry name" value="GlnE"/>
</dbReference>
<dbReference type="InterPro" id="IPR005190">
    <property type="entry name" value="GlnE_rpt_dom"/>
</dbReference>
<dbReference type="InterPro" id="IPR043519">
    <property type="entry name" value="NT_sf"/>
</dbReference>
<dbReference type="InterPro" id="IPR013546">
    <property type="entry name" value="PII_UdlTrfase/GS_AdlTrfase"/>
</dbReference>
<dbReference type="NCBIfam" id="NF010707">
    <property type="entry name" value="PRK14109.1"/>
    <property type="match status" value="1"/>
</dbReference>
<dbReference type="PANTHER" id="PTHR30621:SF0">
    <property type="entry name" value="BIFUNCTIONAL GLUTAMINE SYNTHETASE ADENYLYLTRANSFERASE_ADENYLYL-REMOVING ENZYME"/>
    <property type="match status" value="1"/>
</dbReference>
<dbReference type="PANTHER" id="PTHR30621">
    <property type="entry name" value="GLUTAMINE SYNTHETASE ADENYLYLTRANSFERASE"/>
    <property type="match status" value="1"/>
</dbReference>
<dbReference type="Pfam" id="PF08335">
    <property type="entry name" value="GlnD_UR_UTase"/>
    <property type="match status" value="2"/>
</dbReference>
<dbReference type="Pfam" id="PF03710">
    <property type="entry name" value="GlnE"/>
    <property type="match status" value="2"/>
</dbReference>
<dbReference type="SUPFAM" id="SSF81301">
    <property type="entry name" value="Nucleotidyltransferase"/>
    <property type="match status" value="2"/>
</dbReference>
<dbReference type="SUPFAM" id="SSF81593">
    <property type="entry name" value="Nucleotidyltransferase substrate binding subunit/domain"/>
    <property type="match status" value="2"/>
</dbReference>
<sequence>MVVTKLATQRPKLPSVGRLGLVDPPAGERLAQLGWDRHEDQAHVDLLWSLSRAPDADAALRALIRLSENPDTGWDELNAALLRERSLRGRLFSVLGSSLALGDHLVAHPQSWKLLRGKVTLPSHDQLQRSFVECVEESEGMPGSLVHRLRTQYRDYVLMLAALDLAATVEDEPVLPFTVVAARLADAADAALAAALRVAEASVCGEHPPPRLAVIAMGKCGARELNYVSDVDVIFVAERSDPRNARVASEMMRVASAAFFEVDAALRPEGRNGELVRTLESHIAYYQRWAKTWEFQALLKARPVVGDAELGERYLTALMPMVWRACEREDFVVEVQAMRRRVEQLVPADVRGRELKLGSGGLRDVEFAVQLLQLVHARSDESLRVASTVDALAALGEGGYIGREDAANMTASYEFLRLLEHRLQLQRLKRTHLLPDPEDEEAVRWLARAAHIRPDGRNDAAGVLREELKKQNVRVSKLHTKLFYQPLLESIGPTGLEIAHGMTLEAAGRRLAALGYEGPQTALKHMSALVNQSGRRGRVQSVLLPRLLDWMSYAPDPDGGLLAYRRLSEALATESWYLATLRDKPAVAKRLMHVLGTSAYVPDLLMRAPRVIQQYEDGPAGPKLLETEPAAVARALIASASRYPDPERAIAGARTLRRRELARIGSADLLGLLEVTEVCRALTSVWVAVLQAALDVMIRASLPDDDRAPAAIAVIGMGRLGGAELGYGSDADVMFVCEPATGVDDARAVKWSTSIAERVRALLGTPSVDPPLELDANLRPEGRNGPLVRTLGSYAAYYEQWAQPWEIQALLRAHAVAGDAELGQRFLRMVDKTRYPPDGVSADSVREIRRIKARIESERLPRGADPNTHTKLGRGGLADIEWTVQLLQLQHAHQVPALHNTSTLQSLDVIAAADLVPAADVELLRQAWLTATRARNALVLVRGKPTDQLPGPGRQLNAVAVAAGWRNDDGGEFLDNYLRVTRRAKAVVRKVFGS</sequence>
<accession>P9WN27</accession>
<accession>L0T8Z5</accession>
<accession>P69942</accession>
<accession>Q10379</accession>
<comment type="function">
    <text evidence="1">Involved in the regulation of glutamine synthetase GlnA, a key enzyme in the process to assimilate ammonia. When cellular nitrogen levels are high, the C-terminal adenylyl transferase (AT) inactivates GlnA by covalent transfer of an adenylyl group from ATP to specific tyrosine residue of GlnA, thus reducing its activity. Conversely, when nitrogen levels are low, the N-terminal adenylyl removase (AR) activates GlnA by removing the adenylyl group by phosphorolysis, increasing its activity. The regulatory region of GlnE binds the signal transduction protein PII (GlnB) which indicates the nitrogen status of the cell.</text>
</comment>
<comment type="catalytic activity">
    <reaction evidence="1">
        <text>[glutamine synthetase]-O(4)-(5'-adenylyl)-L-tyrosine + phosphate = [glutamine synthetase]-L-tyrosine + ADP</text>
        <dbReference type="Rhea" id="RHEA:43716"/>
        <dbReference type="Rhea" id="RHEA-COMP:10660"/>
        <dbReference type="Rhea" id="RHEA-COMP:10661"/>
        <dbReference type="ChEBI" id="CHEBI:43474"/>
        <dbReference type="ChEBI" id="CHEBI:46858"/>
        <dbReference type="ChEBI" id="CHEBI:83624"/>
        <dbReference type="ChEBI" id="CHEBI:456216"/>
        <dbReference type="EC" id="2.7.7.89"/>
    </reaction>
</comment>
<comment type="catalytic activity">
    <reaction evidence="1">
        <text>[glutamine synthetase]-L-tyrosine + ATP = [glutamine synthetase]-O(4)-(5'-adenylyl)-L-tyrosine + diphosphate</text>
        <dbReference type="Rhea" id="RHEA:18589"/>
        <dbReference type="Rhea" id="RHEA-COMP:10660"/>
        <dbReference type="Rhea" id="RHEA-COMP:10661"/>
        <dbReference type="ChEBI" id="CHEBI:30616"/>
        <dbReference type="ChEBI" id="CHEBI:33019"/>
        <dbReference type="ChEBI" id="CHEBI:46858"/>
        <dbReference type="ChEBI" id="CHEBI:83624"/>
        <dbReference type="EC" id="2.7.7.42"/>
    </reaction>
</comment>
<comment type="cofactor">
    <cofactor evidence="1">
        <name>Mg(2+)</name>
        <dbReference type="ChEBI" id="CHEBI:18420"/>
    </cofactor>
</comment>
<comment type="miscellaneous">
    <text>Was identified as a high-confidence drug target.</text>
</comment>
<comment type="similarity">
    <text evidence="1">Belongs to the GlnE family.</text>
</comment>
<keyword id="KW-0067">ATP-binding</keyword>
<keyword id="KW-0460">Magnesium</keyword>
<keyword id="KW-0511">Multifunctional enzyme</keyword>
<keyword id="KW-0547">Nucleotide-binding</keyword>
<keyword id="KW-0548">Nucleotidyltransferase</keyword>
<keyword id="KW-1185">Reference proteome</keyword>
<keyword id="KW-0808">Transferase</keyword>
<proteinExistence type="evidence at protein level"/>
<gene>
    <name evidence="1" type="primary">glnE</name>
    <name type="ordered locus">Rv2221c</name>
    <name type="ORF">MTCY190.32c</name>
    <name type="ORF">MTCY427.02c</name>
</gene>
<feature type="chain" id="PRO_0000209257" description="Bifunctional glutamine synthetase adenylyltransferase/adenylyl-removing enzyme">
    <location>
        <begin position="1"/>
        <end position="994"/>
    </location>
</feature>
<feature type="region of interest" description="Adenylyl removase" evidence="1">
    <location>
        <begin position="1"/>
        <end position="487"/>
    </location>
</feature>
<feature type="region of interest" description="Adenylyl transferase" evidence="1">
    <location>
        <begin position="492"/>
        <end position="994"/>
    </location>
</feature>
<reference key="1">
    <citation type="journal article" date="1998" name="Nature">
        <title>Deciphering the biology of Mycobacterium tuberculosis from the complete genome sequence.</title>
        <authorList>
            <person name="Cole S.T."/>
            <person name="Brosch R."/>
            <person name="Parkhill J."/>
            <person name="Garnier T."/>
            <person name="Churcher C.M."/>
            <person name="Harris D.E."/>
            <person name="Gordon S.V."/>
            <person name="Eiglmeier K."/>
            <person name="Gas S."/>
            <person name="Barry C.E. III"/>
            <person name="Tekaia F."/>
            <person name="Badcock K."/>
            <person name="Basham D."/>
            <person name="Brown D."/>
            <person name="Chillingworth T."/>
            <person name="Connor R."/>
            <person name="Davies R.M."/>
            <person name="Devlin K."/>
            <person name="Feltwell T."/>
            <person name="Gentles S."/>
            <person name="Hamlin N."/>
            <person name="Holroyd S."/>
            <person name="Hornsby T."/>
            <person name="Jagels K."/>
            <person name="Krogh A."/>
            <person name="McLean J."/>
            <person name="Moule S."/>
            <person name="Murphy L.D."/>
            <person name="Oliver S."/>
            <person name="Osborne J."/>
            <person name="Quail M.A."/>
            <person name="Rajandream M.A."/>
            <person name="Rogers J."/>
            <person name="Rutter S."/>
            <person name="Seeger K."/>
            <person name="Skelton S."/>
            <person name="Squares S."/>
            <person name="Squares R."/>
            <person name="Sulston J.E."/>
            <person name="Taylor K."/>
            <person name="Whitehead S."/>
            <person name="Barrell B.G."/>
        </authorList>
    </citation>
    <scope>NUCLEOTIDE SEQUENCE [LARGE SCALE GENOMIC DNA]</scope>
    <source>
        <strain>ATCC 25618 / H37Rv</strain>
    </source>
</reference>
<reference key="2">
    <citation type="journal article" date="2008" name="BMC Syst. Biol.">
        <title>targetTB: a target identification pipeline for Mycobacterium tuberculosis through an interactome, reactome and genome-scale structural analysis.</title>
        <authorList>
            <person name="Raman K."/>
            <person name="Yeturu K."/>
            <person name="Chandra N."/>
        </authorList>
    </citation>
    <scope>IDENTIFICATION AS A DRUG TARGET [LARGE SCALE ANALYSIS]</scope>
</reference>
<reference key="3">
    <citation type="journal article" date="2011" name="Mol. Cell. Proteomics">
        <title>Proteogenomic analysis of Mycobacterium tuberculosis by high resolution mass spectrometry.</title>
        <authorList>
            <person name="Kelkar D.S."/>
            <person name="Kumar D."/>
            <person name="Kumar P."/>
            <person name="Balakrishnan L."/>
            <person name="Muthusamy B."/>
            <person name="Yadav A.K."/>
            <person name="Shrivastava P."/>
            <person name="Marimuthu A."/>
            <person name="Anand S."/>
            <person name="Sundaram H."/>
            <person name="Kingsbury R."/>
            <person name="Harsha H.C."/>
            <person name="Nair B."/>
            <person name="Prasad T.S."/>
            <person name="Chauhan D.S."/>
            <person name="Katoch K."/>
            <person name="Katoch V.M."/>
            <person name="Kumar P."/>
            <person name="Chaerkady R."/>
            <person name="Ramachandran S."/>
            <person name="Dash D."/>
            <person name="Pandey A."/>
        </authorList>
    </citation>
    <scope>IDENTIFICATION BY MASS SPECTROMETRY [LARGE SCALE ANALYSIS]</scope>
    <source>
        <strain>ATCC 25618 / H37Rv</strain>
    </source>
</reference>
<name>GLNE_MYCTU</name>
<protein>
    <recommendedName>
        <fullName evidence="1">Bifunctional glutamine synthetase adenylyltransferase/adenylyl-removing enzyme</fullName>
    </recommendedName>
    <alternativeName>
        <fullName evidence="1">ATP:glutamine synthetase adenylyltransferase</fullName>
    </alternativeName>
    <alternativeName>
        <fullName evidence="1">ATase</fullName>
    </alternativeName>
    <domain>
        <recommendedName>
            <fullName evidence="1">Glutamine synthetase adenylyl-L-tyrosine phosphorylase</fullName>
            <ecNumber evidence="1">2.7.7.89</ecNumber>
        </recommendedName>
        <alternativeName>
            <fullName evidence="1">Adenylyl removase</fullName>
            <shortName evidence="1">AR</shortName>
            <shortName evidence="1">AT-N</shortName>
        </alternativeName>
    </domain>
    <domain>
        <recommendedName>
            <fullName evidence="1">Glutamine synthetase adenylyl transferase</fullName>
            <ecNumber evidence="1">2.7.7.42</ecNumber>
        </recommendedName>
        <alternativeName>
            <fullName evidence="1">Adenylyl transferase</fullName>
            <shortName evidence="1">AT</shortName>
            <shortName evidence="1">AT-C</shortName>
        </alternativeName>
    </domain>
</protein>